<protein>
    <recommendedName>
        <fullName evidence="1">Tryptophan--tRNA ligase 1</fullName>
        <ecNumber evidence="1">6.1.1.2</ecNumber>
    </recommendedName>
    <alternativeName>
        <fullName evidence="1">Tryptophanyl-tRNA synthetase 1</fullName>
        <shortName evidence="1">TrpRS 1</shortName>
    </alternativeName>
</protein>
<evidence type="ECO:0000255" key="1">
    <source>
        <dbReference type="HAMAP-Rule" id="MF_00140"/>
    </source>
</evidence>
<accession>Q8CJX0</accession>
<comment type="function">
    <text evidence="1">Catalyzes the attachment of tryptophan to tRNA(Trp).</text>
</comment>
<comment type="catalytic activity">
    <reaction evidence="1">
        <text>tRNA(Trp) + L-tryptophan + ATP = L-tryptophyl-tRNA(Trp) + AMP + diphosphate + H(+)</text>
        <dbReference type="Rhea" id="RHEA:24080"/>
        <dbReference type="Rhea" id="RHEA-COMP:9671"/>
        <dbReference type="Rhea" id="RHEA-COMP:9705"/>
        <dbReference type="ChEBI" id="CHEBI:15378"/>
        <dbReference type="ChEBI" id="CHEBI:30616"/>
        <dbReference type="ChEBI" id="CHEBI:33019"/>
        <dbReference type="ChEBI" id="CHEBI:57912"/>
        <dbReference type="ChEBI" id="CHEBI:78442"/>
        <dbReference type="ChEBI" id="CHEBI:78535"/>
        <dbReference type="ChEBI" id="CHEBI:456215"/>
        <dbReference type="EC" id="6.1.1.2"/>
    </reaction>
</comment>
<comment type="subunit">
    <text evidence="1">Homodimer.</text>
</comment>
<comment type="subcellular location">
    <subcellularLocation>
        <location evidence="1">Cytoplasm</location>
    </subcellularLocation>
</comment>
<comment type="similarity">
    <text evidence="1">Belongs to the class-I aminoacyl-tRNA synthetase family.</text>
</comment>
<dbReference type="EC" id="6.1.1.2" evidence="1"/>
<dbReference type="EMBL" id="AL939116">
    <property type="protein sequence ID" value="CAD55313.1"/>
    <property type="molecule type" value="Genomic_DNA"/>
</dbReference>
<dbReference type="PIR" id="T36282">
    <property type="entry name" value="T36282"/>
</dbReference>
<dbReference type="RefSeq" id="NP_733600.1">
    <property type="nucleotide sequence ID" value="NC_003888.3"/>
</dbReference>
<dbReference type="SMR" id="Q8CJX0"/>
<dbReference type="STRING" id="100226.gene:17760956"/>
<dbReference type="PaxDb" id="100226-SCO3334"/>
<dbReference type="KEGG" id="sco:SCO3334"/>
<dbReference type="PATRIC" id="fig|100226.15.peg.3394"/>
<dbReference type="eggNOG" id="COG0180">
    <property type="taxonomic scope" value="Bacteria"/>
</dbReference>
<dbReference type="HOGENOM" id="CLU_029244_1_1_11"/>
<dbReference type="InParanoid" id="Q8CJX0"/>
<dbReference type="OrthoDB" id="9801042at2"/>
<dbReference type="PhylomeDB" id="Q8CJX0"/>
<dbReference type="BRENDA" id="6.1.1.2">
    <property type="organism ID" value="5998"/>
</dbReference>
<dbReference type="Proteomes" id="UP000001973">
    <property type="component" value="Chromosome"/>
</dbReference>
<dbReference type="GO" id="GO:0005829">
    <property type="term" value="C:cytosol"/>
    <property type="evidence" value="ECO:0000318"/>
    <property type="project" value="GO_Central"/>
</dbReference>
<dbReference type="GO" id="GO:0005524">
    <property type="term" value="F:ATP binding"/>
    <property type="evidence" value="ECO:0007669"/>
    <property type="project" value="UniProtKB-UniRule"/>
</dbReference>
<dbReference type="GO" id="GO:0004830">
    <property type="term" value="F:tryptophan-tRNA ligase activity"/>
    <property type="evidence" value="ECO:0000318"/>
    <property type="project" value="GO_Central"/>
</dbReference>
<dbReference type="GO" id="GO:0006436">
    <property type="term" value="P:tryptophanyl-tRNA aminoacylation"/>
    <property type="evidence" value="ECO:0000318"/>
    <property type="project" value="GO_Central"/>
</dbReference>
<dbReference type="CDD" id="cd00806">
    <property type="entry name" value="TrpRS_core"/>
    <property type="match status" value="1"/>
</dbReference>
<dbReference type="FunFam" id="3.40.50.620:FF:000195">
    <property type="entry name" value="Tryptophan--tRNA ligase"/>
    <property type="match status" value="1"/>
</dbReference>
<dbReference type="Gene3D" id="3.40.50.620">
    <property type="entry name" value="HUPs"/>
    <property type="match status" value="1"/>
</dbReference>
<dbReference type="Gene3D" id="1.10.240.10">
    <property type="entry name" value="Tyrosyl-Transfer RNA Synthetase"/>
    <property type="match status" value="1"/>
</dbReference>
<dbReference type="HAMAP" id="MF_00140_B">
    <property type="entry name" value="Trp_tRNA_synth_B"/>
    <property type="match status" value="1"/>
</dbReference>
<dbReference type="InterPro" id="IPR001412">
    <property type="entry name" value="aa-tRNA-synth_I_CS"/>
</dbReference>
<dbReference type="InterPro" id="IPR002305">
    <property type="entry name" value="aa-tRNA-synth_Ic"/>
</dbReference>
<dbReference type="InterPro" id="IPR014729">
    <property type="entry name" value="Rossmann-like_a/b/a_fold"/>
</dbReference>
<dbReference type="InterPro" id="IPR002306">
    <property type="entry name" value="Trp-tRNA-ligase"/>
</dbReference>
<dbReference type="InterPro" id="IPR024109">
    <property type="entry name" value="Trp-tRNA-ligase_bac-type"/>
</dbReference>
<dbReference type="InterPro" id="IPR050203">
    <property type="entry name" value="Trp-tRNA_synthetase"/>
</dbReference>
<dbReference type="NCBIfam" id="TIGR00233">
    <property type="entry name" value="trpS"/>
    <property type="match status" value="1"/>
</dbReference>
<dbReference type="PANTHER" id="PTHR43766">
    <property type="entry name" value="TRYPTOPHAN--TRNA LIGASE, MITOCHONDRIAL"/>
    <property type="match status" value="1"/>
</dbReference>
<dbReference type="PANTHER" id="PTHR43766:SF1">
    <property type="entry name" value="TRYPTOPHAN--TRNA LIGASE, MITOCHONDRIAL"/>
    <property type="match status" value="1"/>
</dbReference>
<dbReference type="Pfam" id="PF00579">
    <property type="entry name" value="tRNA-synt_1b"/>
    <property type="match status" value="1"/>
</dbReference>
<dbReference type="PRINTS" id="PR01039">
    <property type="entry name" value="TRNASYNTHTRP"/>
</dbReference>
<dbReference type="SUPFAM" id="SSF52374">
    <property type="entry name" value="Nucleotidylyl transferase"/>
    <property type="match status" value="1"/>
</dbReference>
<dbReference type="PROSITE" id="PS00178">
    <property type="entry name" value="AA_TRNA_LIGASE_I"/>
    <property type="match status" value="1"/>
</dbReference>
<feature type="chain" id="PRO_0000136687" description="Tryptophan--tRNA ligase 1">
    <location>
        <begin position="1"/>
        <end position="336"/>
    </location>
</feature>
<feature type="short sequence motif" description="'HIGH' region" evidence="1">
    <location>
        <begin position="10"/>
        <end position="18"/>
    </location>
</feature>
<feature type="short sequence motif" description="'KMSKS' region" evidence="1">
    <location>
        <begin position="197"/>
        <end position="201"/>
    </location>
</feature>
<feature type="binding site" evidence="1">
    <location>
        <begin position="9"/>
        <end position="11"/>
    </location>
    <ligand>
        <name>ATP</name>
        <dbReference type="ChEBI" id="CHEBI:30616"/>
    </ligand>
</feature>
<feature type="binding site" evidence="1">
    <location>
        <begin position="17"/>
        <end position="18"/>
    </location>
    <ligand>
        <name>ATP</name>
        <dbReference type="ChEBI" id="CHEBI:30616"/>
    </ligand>
</feature>
<feature type="binding site" evidence="1">
    <location>
        <position position="137"/>
    </location>
    <ligand>
        <name>L-tryptophan</name>
        <dbReference type="ChEBI" id="CHEBI:57912"/>
    </ligand>
</feature>
<feature type="binding site" evidence="1">
    <location>
        <begin position="149"/>
        <end position="151"/>
    </location>
    <ligand>
        <name>ATP</name>
        <dbReference type="ChEBI" id="CHEBI:30616"/>
    </ligand>
</feature>
<feature type="binding site" evidence="1">
    <location>
        <position position="188"/>
    </location>
    <ligand>
        <name>ATP</name>
        <dbReference type="ChEBI" id="CHEBI:30616"/>
    </ligand>
</feature>
<feature type="binding site" evidence="1">
    <location>
        <begin position="197"/>
        <end position="201"/>
    </location>
    <ligand>
        <name>ATP</name>
        <dbReference type="ChEBI" id="CHEBI:30616"/>
    </ligand>
</feature>
<organism>
    <name type="scientific">Streptomyces coelicolor (strain ATCC BAA-471 / A3(2) / M145)</name>
    <dbReference type="NCBI Taxonomy" id="100226"/>
    <lineage>
        <taxon>Bacteria</taxon>
        <taxon>Bacillati</taxon>
        <taxon>Actinomycetota</taxon>
        <taxon>Actinomycetes</taxon>
        <taxon>Kitasatosporales</taxon>
        <taxon>Streptomycetaceae</taxon>
        <taxon>Streptomyces</taxon>
        <taxon>Streptomyces albidoflavus group</taxon>
    </lineage>
</organism>
<proteinExistence type="inferred from homology"/>
<sequence length="336" mass="36804">MTRVFSGVKPTGHLTLGNYLGAMRRWAAVDQHRSDALFCVVDLHALTVDHDPARVRRLSRQAASLLLAAGLDPELCTVFVQSHVDEHARLSYVLECVATDGEMRRMIQYKEKAARERVRGGSVRLSLLTYPVLMAADILAYGTDEVPVGEDQTQHVELARDLAVRFNQRYGHTFVVPRATSPAVAARVMNLQEPASKMGKSDDTGPGIVYLLDEPDVVRKKVMRAVTDSGRDVVYDPEERAGLANLLEILAACTDGEPAELAGGYDSYGALKKDTAEAVVEMLRPVRERHMELSADPGYVDGVLREGAEKARAMARPTVDDAYRAIGLLPPVNAAR</sequence>
<keyword id="KW-0030">Aminoacyl-tRNA synthetase</keyword>
<keyword id="KW-0067">ATP-binding</keyword>
<keyword id="KW-0963">Cytoplasm</keyword>
<keyword id="KW-0436">Ligase</keyword>
<keyword id="KW-0547">Nucleotide-binding</keyword>
<keyword id="KW-0648">Protein biosynthesis</keyword>
<keyword id="KW-1185">Reference proteome</keyword>
<gene>
    <name evidence="1" type="primary">trpS1</name>
    <name type="ordered locus">SCO3334</name>
    <name type="ORF">SCE68.32</name>
    <name type="ORF">SCE7.01</name>
</gene>
<name>SYW1_STRCO</name>
<reference key="1">
    <citation type="journal article" date="2002" name="Nature">
        <title>Complete genome sequence of the model actinomycete Streptomyces coelicolor A3(2).</title>
        <authorList>
            <person name="Bentley S.D."/>
            <person name="Chater K.F."/>
            <person name="Cerdeno-Tarraga A.-M."/>
            <person name="Challis G.L."/>
            <person name="Thomson N.R."/>
            <person name="James K.D."/>
            <person name="Harris D.E."/>
            <person name="Quail M.A."/>
            <person name="Kieser H."/>
            <person name="Harper D."/>
            <person name="Bateman A."/>
            <person name="Brown S."/>
            <person name="Chandra G."/>
            <person name="Chen C.W."/>
            <person name="Collins M."/>
            <person name="Cronin A."/>
            <person name="Fraser A."/>
            <person name="Goble A."/>
            <person name="Hidalgo J."/>
            <person name="Hornsby T."/>
            <person name="Howarth S."/>
            <person name="Huang C.-H."/>
            <person name="Kieser T."/>
            <person name="Larke L."/>
            <person name="Murphy L.D."/>
            <person name="Oliver K."/>
            <person name="O'Neil S."/>
            <person name="Rabbinowitsch E."/>
            <person name="Rajandream M.A."/>
            <person name="Rutherford K.M."/>
            <person name="Rutter S."/>
            <person name="Seeger K."/>
            <person name="Saunders D."/>
            <person name="Sharp S."/>
            <person name="Squares R."/>
            <person name="Squares S."/>
            <person name="Taylor K."/>
            <person name="Warren T."/>
            <person name="Wietzorrek A."/>
            <person name="Woodward J.R."/>
            <person name="Barrell B.G."/>
            <person name="Parkhill J."/>
            <person name="Hopwood D.A."/>
        </authorList>
    </citation>
    <scope>NUCLEOTIDE SEQUENCE [LARGE SCALE GENOMIC DNA]</scope>
    <source>
        <strain>ATCC BAA-471 / A3(2) / M145</strain>
    </source>
</reference>